<feature type="chain" id="PRO_0000322160" description="U-box domain-containing protein 16">
    <location>
        <begin position="1"/>
        <end position="674"/>
    </location>
</feature>
<feature type="domain" description="U-box">
    <location>
        <begin position="273"/>
        <end position="347"/>
    </location>
</feature>
<feature type="repeat" description="ARM 1">
    <location>
        <begin position="399"/>
        <end position="438"/>
    </location>
</feature>
<feature type="repeat" description="ARM 2">
    <location>
        <begin position="441"/>
        <end position="481"/>
    </location>
</feature>
<feature type="repeat" description="ARM 3">
    <location>
        <begin position="484"/>
        <end position="523"/>
    </location>
</feature>
<proteinExistence type="evidence at transcript level"/>
<dbReference type="EC" id="2.3.2.27"/>
<dbReference type="EMBL" id="AL162351">
    <property type="protein sequence ID" value="CAB82753.1"/>
    <property type="molecule type" value="Genomic_DNA"/>
</dbReference>
<dbReference type="EMBL" id="CP002688">
    <property type="protein sequence ID" value="AED90398.1"/>
    <property type="molecule type" value="Genomic_DNA"/>
</dbReference>
<dbReference type="EMBL" id="BT015367">
    <property type="protein sequence ID" value="AAU05490.1"/>
    <property type="molecule type" value="mRNA"/>
</dbReference>
<dbReference type="EMBL" id="BT015725">
    <property type="protein sequence ID" value="AAU45223.1"/>
    <property type="molecule type" value="mRNA"/>
</dbReference>
<dbReference type="EMBL" id="AK229397">
    <property type="protein sequence ID" value="BAF01259.1"/>
    <property type="molecule type" value="mRNA"/>
</dbReference>
<dbReference type="PIR" id="T48204">
    <property type="entry name" value="T48204"/>
</dbReference>
<dbReference type="SMR" id="Q9LZW3"/>
<dbReference type="FunCoup" id="Q9LZW3">
    <property type="interactions" value="84"/>
</dbReference>
<dbReference type="GlyGen" id="Q9LZW3">
    <property type="glycosylation" value="2 sites"/>
</dbReference>
<dbReference type="PaxDb" id="3702-AT5G01830.1"/>
<dbReference type="ProteomicsDB" id="226248"/>
<dbReference type="EnsemblPlants" id="AT5G01830.1">
    <property type="protein sequence ID" value="AT5G01830.1"/>
    <property type="gene ID" value="AT5G01830"/>
</dbReference>
<dbReference type="GeneID" id="831850"/>
<dbReference type="Gramene" id="AT5G01830.1">
    <property type="protein sequence ID" value="AT5G01830.1"/>
    <property type="gene ID" value="AT5G01830"/>
</dbReference>
<dbReference type="KEGG" id="ath:AT5G01830"/>
<dbReference type="Araport" id="AT5G01830"/>
<dbReference type="TAIR" id="AT5G01830"/>
<dbReference type="eggNOG" id="KOG0167">
    <property type="taxonomic scope" value="Eukaryota"/>
</dbReference>
<dbReference type="HOGENOM" id="CLU_006348_5_2_1"/>
<dbReference type="InParanoid" id="Q9LZW3"/>
<dbReference type="OMA" id="VPAYKKR"/>
<dbReference type="OrthoDB" id="629492at2759"/>
<dbReference type="PhylomeDB" id="Q9LZW3"/>
<dbReference type="UniPathway" id="UPA00143"/>
<dbReference type="PRO" id="PR:Q9LZW3"/>
<dbReference type="Proteomes" id="UP000006548">
    <property type="component" value="Chromosome 5"/>
</dbReference>
<dbReference type="ExpressionAtlas" id="Q9LZW3">
    <property type="expression patterns" value="baseline and differential"/>
</dbReference>
<dbReference type="GO" id="GO:0004842">
    <property type="term" value="F:ubiquitin-protein transferase activity"/>
    <property type="evidence" value="ECO:0007669"/>
    <property type="project" value="InterPro"/>
</dbReference>
<dbReference type="GO" id="GO:0016567">
    <property type="term" value="P:protein ubiquitination"/>
    <property type="evidence" value="ECO:0007669"/>
    <property type="project" value="UniProtKB-UniPathway"/>
</dbReference>
<dbReference type="CDD" id="cd16664">
    <property type="entry name" value="RING-Ubox_PUB"/>
    <property type="match status" value="1"/>
</dbReference>
<dbReference type="FunFam" id="3.30.40.10:FF:000562">
    <property type="entry name" value="RING-type E3 ubiquitin transferase"/>
    <property type="match status" value="1"/>
</dbReference>
<dbReference type="Gene3D" id="1.25.10.10">
    <property type="entry name" value="Leucine-rich Repeat Variant"/>
    <property type="match status" value="1"/>
</dbReference>
<dbReference type="Gene3D" id="3.30.40.10">
    <property type="entry name" value="Zinc/RING finger domain, C3HC4 (zinc finger)"/>
    <property type="match status" value="1"/>
</dbReference>
<dbReference type="InterPro" id="IPR011989">
    <property type="entry name" value="ARM-like"/>
</dbReference>
<dbReference type="InterPro" id="IPR016024">
    <property type="entry name" value="ARM-type_fold"/>
</dbReference>
<dbReference type="InterPro" id="IPR000225">
    <property type="entry name" value="Armadillo"/>
</dbReference>
<dbReference type="InterPro" id="IPR045210">
    <property type="entry name" value="RING-Ubox_PUB"/>
</dbReference>
<dbReference type="InterPro" id="IPR003613">
    <property type="entry name" value="Ubox_domain"/>
</dbReference>
<dbReference type="InterPro" id="IPR013083">
    <property type="entry name" value="Znf_RING/FYVE/PHD"/>
</dbReference>
<dbReference type="PANTHER" id="PTHR23315">
    <property type="entry name" value="U BOX DOMAIN-CONTAINING"/>
    <property type="match status" value="1"/>
</dbReference>
<dbReference type="PANTHER" id="PTHR23315:SF63">
    <property type="entry name" value="U-BOX DOMAIN-CONTAINING PROTEIN 16"/>
    <property type="match status" value="1"/>
</dbReference>
<dbReference type="Pfam" id="PF00514">
    <property type="entry name" value="Arm"/>
    <property type="match status" value="1"/>
</dbReference>
<dbReference type="Pfam" id="PF25368">
    <property type="entry name" value="PUB10_N"/>
    <property type="match status" value="1"/>
</dbReference>
<dbReference type="Pfam" id="PF04564">
    <property type="entry name" value="U-box"/>
    <property type="match status" value="1"/>
</dbReference>
<dbReference type="SMART" id="SM00185">
    <property type="entry name" value="ARM"/>
    <property type="match status" value="2"/>
</dbReference>
<dbReference type="SMART" id="SM00504">
    <property type="entry name" value="Ubox"/>
    <property type="match status" value="1"/>
</dbReference>
<dbReference type="SUPFAM" id="SSF48371">
    <property type="entry name" value="ARM repeat"/>
    <property type="match status" value="1"/>
</dbReference>
<dbReference type="SUPFAM" id="SSF57850">
    <property type="entry name" value="RING/U-box"/>
    <property type="match status" value="1"/>
</dbReference>
<dbReference type="PROSITE" id="PS50176">
    <property type="entry name" value="ARM_REPEAT"/>
    <property type="match status" value="1"/>
</dbReference>
<dbReference type="PROSITE" id="PS51698">
    <property type="entry name" value="U_BOX"/>
    <property type="match status" value="1"/>
</dbReference>
<protein>
    <recommendedName>
        <fullName>U-box domain-containing protein 16</fullName>
        <ecNumber>2.3.2.27</ecNumber>
    </recommendedName>
    <alternativeName>
        <fullName>Plant U-box protein 16</fullName>
    </alternativeName>
    <alternativeName>
        <fullName evidence="2">RING-type E3 ubiquitin transferase PUB16</fullName>
    </alternativeName>
</protein>
<comment type="function">
    <text evidence="1">Functions as an E3 ubiquitin ligase.</text>
</comment>
<comment type="catalytic activity">
    <reaction>
        <text>S-ubiquitinyl-[E2 ubiquitin-conjugating enzyme]-L-cysteine + [acceptor protein]-L-lysine = [E2 ubiquitin-conjugating enzyme]-L-cysteine + N(6)-ubiquitinyl-[acceptor protein]-L-lysine.</text>
        <dbReference type="EC" id="2.3.2.27"/>
    </reaction>
</comment>
<comment type="pathway">
    <text>Protein modification; protein ubiquitination.</text>
</comment>
<accession>Q9LZW3</accession>
<keyword id="KW-1185">Reference proteome</keyword>
<keyword id="KW-0677">Repeat</keyword>
<keyword id="KW-0808">Transferase</keyword>
<keyword id="KW-0833">Ubl conjugation pathway</keyword>
<organism>
    <name type="scientific">Arabidopsis thaliana</name>
    <name type="common">Mouse-ear cress</name>
    <dbReference type="NCBI Taxonomy" id="3702"/>
    <lineage>
        <taxon>Eukaryota</taxon>
        <taxon>Viridiplantae</taxon>
        <taxon>Streptophyta</taxon>
        <taxon>Embryophyta</taxon>
        <taxon>Tracheophyta</taxon>
        <taxon>Spermatophyta</taxon>
        <taxon>Magnoliopsida</taxon>
        <taxon>eudicotyledons</taxon>
        <taxon>Gunneridae</taxon>
        <taxon>Pentapetalae</taxon>
        <taxon>rosids</taxon>
        <taxon>malvids</taxon>
        <taxon>Brassicales</taxon>
        <taxon>Brassicaceae</taxon>
        <taxon>Camelineae</taxon>
        <taxon>Arabidopsis</taxon>
    </lineage>
</organism>
<evidence type="ECO:0000250" key="1"/>
<evidence type="ECO:0000305" key="2"/>
<gene>
    <name type="primary">PUB16</name>
    <name type="ordered locus">At5g01830</name>
    <name type="ORF">T20L15_100</name>
</gene>
<name>PUB16_ARATH</name>
<sequence length="674" mass="73600">MAVTLDSPSPARKRRPLVVGSFESPKLSSDTKLTRSLFLASHEISSMQPLPFILRRNSLSLIRKVKILASVFDELLLPRSQLVVYSQSAHLCFEEMQIVMQRIKSLIDDCSRVSKLWLLLQIDIVAFNFHELVTDLSTVLDILPLHDFDLSDDAQDLISLLTKQCSDSVQFVDARDVALRRKVTDTIAGIKHQISPDHSTLIKIFNDLGLSDSASLTDEIQRLEDEIQDQIDDRSKSAAASLIGLVRYSKCVLYGPSTPAPDFRRHQSLSDANIPADFRCPITLELMRDPVVVATGQTYDRESIDLWIQSGHNTCPKTGQVLKHTSLVPNRALKNLIVLWCRDQKIPFELYGDGGGEPAPCKEAVEFTKMMVSFLIEKLSVADSNGVVFELRALAKSDTVARACIAEAGAIPKLVRYLATECPSLQINAVTTILNLSILEQNKTRIMETDGALNGVIEVLRSGATWEAKANAAATLFSLAGVSAYRRRLGRKARVVSGLVDLAKQGPTSSKRDALVAILNLVAERENVGRFVEAGVMGAAGDAFQELPEEAVAVVEAVVRRGGLMAVSAAFSLIRLLGEVMREGADTTRESAAATLVTMCRKGGSELVAEMAAIPGIERVIWEMIGAGTARGGRKAASLMRYLRRWAAGDTHNTAAETQSIVVPTPSRIFSPVL</sequence>
<reference key="1">
    <citation type="journal article" date="2000" name="Nature">
        <title>Sequence and analysis of chromosome 5 of the plant Arabidopsis thaliana.</title>
        <authorList>
            <person name="Tabata S."/>
            <person name="Kaneko T."/>
            <person name="Nakamura Y."/>
            <person name="Kotani H."/>
            <person name="Kato T."/>
            <person name="Asamizu E."/>
            <person name="Miyajima N."/>
            <person name="Sasamoto S."/>
            <person name="Kimura T."/>
            <person name="Hosouchi T."/>
            <person name="Kawashima K."/>
            <person name="Kohara M."/>
            <person name="Matsumoto M."/>
            <person name="Matsuno A."/>
            <person name="Muraki A."/>
            <person name="Nakayama S."/>
            <person name="Nakazaki N."/>
            <person name="Naruo K."/>
            <person name="Okumura S."/>
            <person name="Shinpo S."/>
            <person name="Takeuchi C."/>
            <person name="Wada T."/>
            <person name="Watanabe A."/>
            <person name="Yamada M."/>
            <person name="Yasuda M."/>
            <person name="Sato S."/>
            <person name="de la Bastide M."/>
            <person name="Huang E."/>
            <person name="Spiegel L."/>
            <person name="Gnoj L."/>
            <person name="O'Shaughnessy A."/>
            <person name="Preston R."/>
            <person name="Habermann K."/>
            <person name="Murray J."/>
            <person name="Johnson D."/>
            <person name="Rohlfing T."/>
            <person name="Nelson J."/>
            <person name="Stoneking T."/>
            <person name="Pepin K."/>
            <person name="Spieth J."/>
            <person name="Sekhon M."/>
            <person name="Armstrong J."/>
            <person name="Becker M."/>
            <person name="Belter E."/>
            <person name="Cordum H."/>
            <person name="Cordes M."/>
            <person name="Courtney L."/>
            <person name="Courtney W."/>
            <person name="Dante M."/>
            <person name="Du H."/>
            <person name="Edwards J."/>
            <person name="Fryman J."/>
            <person name="Haakensen B."/>
            <person name="Lamar E."/>
            <person name="Latreille P."/>
            <person name="Leonard S."/>
            <person name="Meyer R."/>
            <person name="Mulvaney E."/>
            <person name="Ozersky P."/>
            <person name="Riley A."/>
            <person name="Strowmatt C."/>
            <person name="Wagner-McPherson C."/>
            <person name="Wollam A."/>
            <person name="Yoakum M."/>
            <person name="Bell M."/>
            <person name="Dedhia N."/>
            <person name="Parnell L."/>
            <person name="Shah R."/>
            <person name="Rodriguez M."/>
            <person name="Hoon See L."/>
            <person name="Vil D."/>
            <person name="Baker J."/>
            <person name="Kirchoff K."/>
            <person name="Toth K."/>
            <person name="King L."/>
            <person name="Bahret A."/>
            <person name="Miller B."/>
            <person name="Marra M.A."/>
            <person name="Martienssen R."/>
            <person name="McCombie W.R."/>
            <person name="Wilson R.K."/>
            <person name="Murphy G."/>
            <person name="Bancroft I."/>
            <person name="Volckaert G."/>
            <person name="Wambutt R."/>
            <person name="Duesterhoeft A."/>
            <person name="Stiekema W."/>
            <person name="Pohl T."/>
            <person name="Entian K.-D."/>
            <person name="Terryn N."/>
            <person name="Hartley N."/>
            <person name="Bent E."/>
            <person name="Johnson S."/>
            <person name="Langham S.-A."/>
            <person name="McCullagh B."/>
            <person name="Robben J."/>
            <person name="Grymonprez B."/>
            <person name="Zimmermann W."/>
            <person name="Ramsperger U."/>
            <person name="Wedler H."/>
            <person name="Balke K."/>
            <person name="Wedler E."/>
            <person name="Peters S."/>
            <person name="van Staveren M."/>
            <person name="Dirkse W."/>
            <person name="Mooijman P."/>
            <person name="Klein Lankhorst R."/>
            <person name="Weitzenegger T."/>
            <person name="Bothe G."/>
            <person name="Rose M."/>
            <person name="Hauf J."/>
            <person name="Berneiser S."/>
            <person name="Hempel S."/>
            <person name="Feldpausch M."/>
            <person name="Lamberth S."/>
            <person name="Villarroel R."/>
            <person name="Gielen J."/>
            <person name="Ardiles W."/>
            <person name="Bents O."/>
            <person name="Lemcke K."/>
            <person name="Kolesov G."/>
            <person name="Mayer K.F.X."/>
            <person name="Rudd S."/>
            <person name="Schoof H."/>
            <person name="Schueller C."/>
            <person name="Zaccaria P."/>
            <person name="Mewes H.-W."/>
            <person name="Bevan M."/>
            <person name="Fransz P.F."/>
        </authorList>
    </citation>
    <scope>NUCLEOTIDE SEQUENCE [LARGE SCALE GENOMIC DNA]</scope>
    <source>
        <strain>cv. Columbia</strain>
    </source>
</reference>
<reference key="2">
    <citation type="journal article" date="2017" name="Plant J.">
        <title>Araport11: a complete reannotation of the Arabidopsis thaliana reference genome.</title>
        <authorList>
            <person name="Cheng C.Y."/>
            <person name="Krishnakumar V."/>
            <person name="Chan A.P."/>
            <person name="Thibaud-Nissen F."/>
            <person name="Schobel S."/>
            <person name="Town C.D."/>
        </authorList>
    </citation>
    <scope>GENOME REANNOTATION</scope>
    <source>
        <strain>cv. Columbia</strain>
    </source>
</reference>
<reference key="3">
    <citation type="submission" date="2004-09" db="EMBL/GenBank/DDBJ databases">
        <title>Arabidopsis ORF clones.</title>
        <authorList>
            <person name="Cheuk R.F."/>
            <person name="Chen H."/>
            <person name="Kim C.J."/>
            <person name="Shinn P."/>
            <person name="Ecker J.R."/>
        </authorList>
    </citation>
    <scope>NUCLEOTIDE SEQUENCE [LARGE SCALE MRNA]</scope>
    <source>
        <strain>cv. Columbia</strain>
    </source>
</reference>
<reference key="4">
    <citation type="submission" date="2006-07" db="EMBL/GenBank/DDBJ databases">
        <title>Large-scale analysis of RIKEN Arabidopsis full-length (RAFL) cDNAs.</title>
        <authorList>
            <person name="Totoki Y."/>
            <person name="Seki M."/>
            <person name="Ishida J."/>
            <person name="Nakajima M."/>
            <person name="Enju A."/>
            <person name="Kamiya A."/>
            <person name="Narusaka M."/>
            <person name="Shin-i T."/>
            <person name="Nakagawa M."/>
            <person name="Sakamoto N."/>
            <person name="Oishi K."/>
            <person name="Kohara Y."/>
            <person name="Kobayashi M."/>
            <person name="Toyoda A."/>
            <person name="Sakaki Y."/>
            <person name="Sakurai T."/>
            <person name="Iida K."/>
            <person name="Akiyama K."/>
            <person name="Satou M."/>
            <person name="Toyoda T."/>
            <person name="Konagaya A."/>
            <person name="Carninci P."/>
            <person name="Kawai J."/>
            <person name="Hayashizaki Y."/>
            <person name="Shinozaki K."/>
        </authorList>
    </citation>
    <scope>NUCLEOTIDE SEQUENCE [LARGE SCALE MRNA]</scope>
    <source>
        <strain>cv. Columbia</strain>
    </source>
</reference>
<reference key="5">
    <citation type="journal article" date="2001" name="Trends Plant Sci.">
        <title>The U-box protein family in plants.</title>
        <authorList>
            <person name="Azevedo C."/>
            <person name="Santos-Rosa M.J."/>
            <person name="Shirasu K."/>
        </authorList>
    </citation>
    <scope>GENE FAMILY ORGANIZATION</scope>
    <scope>NOMENCLATURE</scope>
</reference>
<reference key="6">
    <citation type="journal article" date="2004" name="Plant Physiol.">
        <title>A large complement of the predicted Arabidopsis ARM repeat proteins are members of the U-box E3 ubiquitin ligase family.</title>
        <authorList>
            <person name="Mudgil Y."/>
            <person name="Shiu S.-H."/>
            <person name="Stone S.L."/>
            <person name="Salt J.N."/>
            <person name="Goring D.R."/>
        </authorList>
    </citation>
    <scope>GENE FAMILY ORGANIZATION</scope>
</reference>